<feature type="chain" id="PRO_1000121808" description="Large ribosomal subunit protein uL29">
    <location>
        <begin position="1"/>
        <end position="63"/>
    </location>
</feature>
<dbReference type="EMBL" id="CP001138">
    <property type="protein sequence ID" value="ACH52313.1"/>
    <property type="molecule type" value="Genomic_DNA"/>
</dbReference>
<dbReference type="RefSeq" id="WP_000644742.1">
    <property type="nucleotide sequence ID" value="NC_011149.1"/>
</dbReference>
<dbReference type="SMR" id="B5F7T7"/>
<dbReference type="GeneID" id="93035739"/>
<dbReference type="KEGG" id="sea:SeAg_B3628"/>
<dbReference type="HOGENOM" id="CLU_158491_1_2_6"/>
<dbReference type="Proteomes" id="UP000008819">
    <property type="component" value="Chromosome"/>
</dbReference>
<dbReference type="GO" id="GO:0022625">
    <property type="term" value="C:cytosolic large ribosomal subunit"/>
    <property type="evidence" value="ECO:0007669"/>
    <property type="project" value="TreeGrafter"/>
</dbReference>
<dbReference type="GO" id="GO:0003735">
    <property type="term" value="F:structural constituent of ribosome"/>
    <property type="evidence" value="ECO:0007669"/>
    <property type="project" value="InterPro"/>
</dbReference>
<dbReference type="GO" id="GO:0006412">
    <property type="term" value="P:translation"/>
    <property type="evidence" value="ECO:0007669"/>
    <property type="project" value="UniProtKB-UniRule"/>
</dbReference>
<dbReference type="CDD" id="cd00427">
    <property type="entry name" value="Ribosomal_L29_HIP"/>
    <property type="match status" value="1"/>
</dbReference>
<dbReference type="Gene3D" id="6.10.140.1970">
    <property type="match status" value="1"/>
</dbReference>
<dbReference type="HAMAP" id="MF_00374">
    <property type="entry name" value="Ribosomal_uL29"/>
    <property type="match status" value="1"/>
</dbReference>
<dbReference type="InterPro" id="IPR050063">
    <property type="entry name" value="Ribosomal_protein_uL29"/>
</dbReference>
<dbReference type="InterPro" id="IPR001854">
    <property type="entry name" value="Ribosomal_uL29"/>
</dbReference>
<dbReference type="InterPro" id="IPR018254">
    <property type="entry name" value="Ribosomal_uL29_CS"/>
</dbReference>
<dbReference type="InterPro" id="IPR036049">
    <property type="entry name" value="Ribosomal_uL29_sf"/>
</dbReference>
<dbReference type="NCBIfam" id="TIGR00012">
    <property type="entry name" value="L29"/>
    <property type="match status" value="1"/>
</dbReference>
<dbReference type="PANTHER" id="PTHR10916">
    <property type="entry name" value="60S RIBOSOMAL PROTEIN L35/50S RIBOSOMAL PROTEIN L29"/>
    <property type="match status" value="1"/>
</dbReference>
<dbReference type="PANTHER" id="PTHR10916:SF0">
    <property type="entry name" value="LARGE RIBOSOMAL SUBUNIT PROTEIN UL29C"/>
    <property type="match status" value="1"/>
</dbReference>
<dbReference type="Pfam" id="PF00831">
    <property type="entry name" value="Ribosomal_L29"/>
    <property type="match status" value="1"/>
</dbReference>
<dbReference type="SUPFAM" id="SSF46561">
    <property type="entry name" value="Ribosomal protein L29 (L29p)"/>
    <property type="match status" value="1"/>
</dbReference>
<dbReference type="PROSITE" id="PS00579">
    <property type="entry name" value="RIBOSOMAL_L29"/>
    <property type="match status" value="1"/>
</dbReference>
<comment type="similarity">
    <text evidence="1">Belongs to the universal ribosomal protein uL29 family.</text>
</comment>
<evidence type="ECO:0000255" key="1">
    <source>
        <dbReference type="HAMAP-Rule" id="MF_00374"/>
    </source>
</evidence>
<evidence type="ECO:0000305" key="2"/>
<name>RL29_SALA4</name>
<protein>
    <recommendedName>
        <fullName evidence="1">Large ribosomal subunit protein uL29</fullName>
    </recommendedName>
    <alternativeName>
        <fullName evidence="2">50S ribosomal protein L29</fullName>
    </alternativeName>
</protein>
<reference key="1">
    <citation type="journal article" date="2011" name="J. Bacteriol.">
        <title>Comparative genomics of 28 Salmonella enterica isolates: evidence for CRISPR-mediated adaptive sublineage evolution.</title>
        <authorList>
            <person name="Fricke W.F."/>
            <person name="Mammel M.K."/>
            <person name="McDermott P.F."/>
            <person name="Tartera C."/>
            <person name="White D.G."/>
            <person name="Leclerc J.E."/>
            <person name="Ravel J."/>
            <person name="Cebula T.A."/>
        </authorList>
    </citation>
    <scope>NUCLEOTIDE SEQUENCE [LARGE SCALE GENOMIC DNA]</scope>
    <source>
        <strain>SL483</strain>
    </source>
</reference>
<proteinExistence type="inferred from homology"/>
<gene>
    <name evidence="1" type="primary">rpmC</name>
    <name type="ordered locus">SeAg_B3628</name>
</gene>
<keyword id="KW-0687">Ribonucleoprotein</keyword>
<keyword id="KW-0689">Ribosomal protein</keyword>
<organism>
    <name type="scientific">Salmonella agona (strain SL483)</name>
    <dbReference type="NCBI Taxonomy" id="454166"/>
    <lineage>
        <taxon>Bacteria</taxon>
        <taxon>Pseudomonadati</taxon>
        <taxon>Pseudomonadota</taxon>
        <taxon>Gammaproteobacteria</taxon>
        <taxon>Enterobacterales</taxon>
        <taxon>Enterobacteriaceae</taxon>
        <taxon>Salmonella</taxon>
    </lineage>
</organism>
<sequence>MKAKELREKSVEELNTELLNLLREQFNLRMQAASGQLQQSHLLKQVRRDVARVKTLLTEKAGA</sequence>
<accession>B5F7T7</accession>